<keyword id="KW-0067">ATP-binding</keyword>
<keyword id="KW-0963">Cytoplasm</keyword>
<keyword id="KW-1015">Disulfide bond</keyword>
<keyword id="KW-0547">Nucleotide-binding</keyword>
<keyword id="KW-1185">Reference proteome</keyword>
<keyword id="KW-0694">RNA-binding</keyword>
<keyword id="KW-0808">Transferase</keyword>
<keyword id="KW-0819">tRNA processing</keyword>
<keyword id="KW-0820">tRNA-binding</keyword>
<organism>
    <name type="scientific">Oceanobacillus iheyensis (strain DSM 14371 / CIP 107618 / JCM 11309 / KCTC 3954 / HTE831)</name>
    <dbReference type="NCBI Taxonomy" id="221109"/>
    <lineage>
        <taxon>Bacteria</taxon>
        <taxon>Bacillati</taxon>
        <taxon>Bacillota</taxon>
        <taxon>Bacilli</taxon>
        <taxon>Bacillales</taxon>
        <taxon>Bacillaceae</taxon>
        <taxon>Oceanobacillus</taxon>
    </lineage>
</organism>
<protein>
    <recommendedName>
        <fullName evidence="1">tRNA-specific 2-thiouridylase MnmA</fullName>
        <ecNumber evidence="1">2.8.1.13</ecNumber>
    </recommendedName>
</protein>
<gene>
    <name evidence="1" type="primary">mnmA</name>
    <name type="synonym">trmU</name>
    <name type="ordered locus">OB2014</name>
</gene>
<proteinExistence type="inferred from homology"/>
<name>MNMA_OCEIH</name>
<sequence>MKNNKDTRVVVGMSGGVDSSVAALLLKQQGYDVVGIFMKNWDDTDEFGVCTATEDFDDVVRVCNQLEIPYYSVNFEKQYWDKVFTYFLDEYKAGRTPNPDVMCNKEIKFKAFLDHALALGADYLATGHYAQVRRDKNGRVEMLRGNDENKDQTYFLNQLSEDVLDKVMFPLGHLPKSEVRKIAKEHELVTAEKKDSTGICFIGERNFKEFLSEYLPAQPGEMQTLDGIVKGSHDGLMYYTLGQRQGLGIGGSGDPWFVVGKNLTDNILYVGQGYENDYLYSNALVATDINWIQPDKISDTFNCTAKFRYRQQDSEVNVTIKSENEVYVAFKEDQRAITPGQAVVFYDGEVCLGGGTIDTIIKNDHKLDYVG</sequence>
<reference key="1">
    <citation type="journal article" date="2002" name="Nucleic Acids Res.">
        <title>Genome sequence of Oceanobacillus iheyensis isolated from the Iheya Ridge and its unexpected adaptive capabilities to extreme environments.</title>
        <authorList>
            <person name="Takami H."/>
            <person name="Takaki Y."/>
            <person name="Uchiyama I."/>
        </authorList>
    </citation>
    <scope>NUCLEOTIDE SEQUENCE [LARGE SCALE GENOMIC DNA]</scope>
    <source>
        <strain>DSM 14371 / CIP 107618 / JCM 11309 / KCTC 3954 / HTE831</strain>
    </source>
</reference>
<comment type="function">
    <text evidence="1">Catalyzes the 2-thiolation of uridine at the wobble position (U34) of tRNA, leading to the formation of s(2)U34.</text>
</comment>
<comment type="catalytic activity">
    <reaction evidence="1">
        <text>S-sulfanyl-L-cysteinyl-[protein] + uridine(34) in tRNA + AH2 + ATP = 2-thiouridine(34) in tRNA + L-cysteinyl-[protein] + A + AMP + diphosphate + H(+)</text>
        <dbReference type="Rhea" id="RHEA:47032"/>
        <dbReference type="Rhea" id="RHEA-COMP:10131"/>
        <dbReference type="Rhea" id="RHEA-COMP:11726"/>
        <dbReference type="Rhea" id="RHEA-COMP:11727"/>
        <dbReference type="Rhea" id="RHEA-COMP:11728"/>
        <dbReference type="ChEBI" id="CHEBI:13193"/>
        <dbReference type="ChEBI" id="CHEBI:15378"/>
        <dbReference type="ChEBI" id="CHEBI:17499"/>
        <dbReference type="ChEBI" id="CHEBI:29950"/>
        <dbReference type="ChEBI" id="CHEBI:30616"/>
        <dbReference type="ChEBI" id="CHEBI:33019"/>
        <dbReference type="ChEBI" id="CHEBI:61963"/>
        <dbReference type="ChEBI" id="CHEBI:65315"/>
        <dbReference type="ChEBI" id="CHEBI:87170"/>
        <dbReference type="ChEBI" id="CHEBI:456215"/>
        <dbReference type="EC" id="2.8.1.13"/>
    </reaction>
</comment>
<comment type="subcellular location">
    <subcellularLocation>
        <location evidence="1">Cytoplasm</location>
    </subcellularLocation>
</comment>
<comment type="similarity">
    <text evidence="1">Belongs to the MnmA/TRMU family.</text>
</comment>
<feature type="chain" id="PRO_0000121660" description="tRNA-specific 2-thiouridylase MnmA">
    <location>
        <begin position="1"/>
        <end position="371"/>
    </location>
</feature>
<feature type="region of interest" description="Interaction with target base in tRNA" evidence="1">
    <location>
        <begin position="98"/>
        <end position="100"/>
    </location>
</feature>
<feature type="region of interest" description="Interaction with tRNA" evidence="1">
    <location>
        <begin position="150"/>
        <end position="152"/>
    </location>
</feature>
<feature type="region of interest" description="Interaction with tRNA" evidence="1">
    <location>
        <begin position="308"/>
        <end position="309"/>
    </location>
</feature>
<feature type="active site" description="Nucleophile" evidence="1">
    <location>
        <position position="103"/>
    </location>
</feature>
<feature type="active site" description="Cysteine persulfide intermediate" evidence="1">
    <location>
        <position position="200"/>
    </location>
</feature>
<feature type="binding site" evidence="1">
    <location>
        <begin position="12"/>
        <end position="19"/>
    </location>
    <ligand>
        <name>ATP</name>
        <dbReference type="ChEBI" id="CHEBI:30616"/>
    </ligand>
</feature>
<feature type="binding site" evidence="1">
    <location>
        <position position="38"/>
    </location>
    <ligand>
        <name>ATP</name>
        <dbReference type="ChEBI" id="CHEBI:30616"/>
    </ligand>
</feature>
<feature type="binding site" evidence="1">
    <location>
        <position position="127"/>
    </location>
    <ligand>
        <name>ATP</name>
        <dbReference type="ChEBI" id="CHEBI:30616"/>
    </ligand>
</feature>
<feature type="site" description="Interaction with tRNA" evidence="1">
    <location>
        <position position="128"/>
    </location>
</feature>
<feature type="site" description="Interaction with tRNA" evidence="1">
    <location>
        <position position="341"/>
    </location>
</feature>
<feature type="disulfide bond" description="Alternate" evidence="1">
    <location>
        <begin position="103"/>
        <end position="200"/>
    </location>
</feature>
<evidence type="ECO:0000255" key="1">
    <source>
        <dbReference type="HAMAP-Rule" id="MF_00144"/>
    </source>
</evidence>
<dbReference type="EC" id="2.8.1.13" evidence="1"/>
<dbReference type="EMBL" id="BA000028">
    <property type="protein sequence ID" value="BAC13970.1"/>
    <property type="molecule type" value="Genomic_DNA"/>
</dbReference>
<dbReference type="RefSeq" id="WP_011066410.1">
    <property type="nucleotide sequence ID" value="NC_004193.1"/>
</dbReference>
<dbReference type="SMR" id="Q8CXC7"/>
<dbReference type="STRING" id="221109.gene:10734260"/>
<dbReference type="KEGG" id="oih:OB2014"/>
<dbReference type="eggNOG" id="COG0482">
    <property type="taxonomic scope" value="Bacteria"/>
</dbReference>
<dbReference type="HOGENOM" id="CLU_035188_1_0_9"/>
<dbReference type="OrthoDB" id="9800696at2"/>
<dbReference type="PhylomeDB" id="Q8CXC7"/>
<dbReference type="Proteomes" id="UP000000822">
    <property type="component" value="Chromosome"/>
</dbReference>
<dbReference type="GO" id="GO:0005737">
    <property type="term" value="C:cytoplasm"/>
    <property type="evidence" value="ECO:0007669"/>
    <property type="project" value="UniProtKB-SubCell"/>
</dbReference>
<dbReference type="GO" id="GO:0005524">
    <property type="term" value="F:ATP binding"/>
    <property type="evidence" value="ECO:0007669"/>
    <property type="project" value="UniProtKB-KW"/>
</dbReference>
<dbReference type="GO" id="GO:0000049">
    <property type="term" value="F:tRNA binding"/>
    <property type="evidence" value="ECO:0007669"/>
    <property type="project" value="UniProtKB-KW"/>
</dbReference>
<dbReference type="GO" id="GO:0103016">
    <property type="term" value="F:tRNA-uridine 2-sulfurtransferase activity"/>
    <property type="evidence" value="ECO:0007669"/>
    <property type="project" value="UniProtKB-EC"/>
</dbReference>
<dbReference type="GO" id="GO:0002143">
    <property type="term" value="P:tRNA wobble position uridine thiolation"/>
    <property type="evidence" value="ECO:0007669"/>
    <property type="project" value="TreeGrafter"/>
</dbReference>
<dbReference type="CDD" id="cd01998">
    <property type="entry name" value="MnmA_TRMU-like"/>
    <property type="match status" value="1"/>
</dbReference>
<dbReference type="FunFam" id="2.30.30.280:FF:000001">
    <property type="entry name" value="tRNA-specific 2-thiouridylase MnmA"/>
    <property type="match status" value="1"/>
</dbReference>
<dbReference type="FunFam" id="2.40.30.10:FF:000023">
    <property type="entry name" value="tRNA-specific 2-thiouridylase MnmA"/>
    <property type="match status" value="1"/>
</dbReference>
<dbReference type="FunFam" id="3.40.50.620:FF:000004">
    <property type="entry name" value="tRNA-specific 2-thiouridylase MnmA"/>
    <property type="match status" value="1"/>
</dbReference>
<dbReference type="Gene3D" id="2.30.30.280">
    <property type="entry name" value="Adenine nucleotide alpha hydrolases-like domains"/>
    <property type="match status" value="1"/>
</dbReference>
<dbReference type="Gene3D" id="3.40.50.620">
    <property type="entry name" value="HUPs"/>
    <property type="match status" value="1"/>
</dbReference>
<dbReference type="Gene3D" id="2.40.30.10">
    <property type="entry name" value="Translation factors"/>
    <property type="match status" value="1"/>
</dbReference>
<dbReference type="HAMAP" id="MF_00144">
    <property type="entry name" value="tRNA_thiouridyl_MnmA"/>
    <property type="match status" value="1"/>
</dbReference>
<dbReference type="InterPro" id="IPR004506">
    <property type="entry name" value="MnmA-like"/>
</dbReference>
<dbReference type="InterPro" id="IPR046885">
    <property type="entry name" value="MnmA-like_C"/>
</dbReference>
<dbReference type="InterPro" id="IPR046884">
    <property type="entry name" value="MnmA-like_central"/>
</dbReference>
<dbReference type="InterPro" id="IPR023382">
    <property type="entry name" value="MnmA-like_central_sf"/>
</dbReference>
<dbReference type="InterPro" id="IPR014729">
    <property type="entry name" value="Rossmann-like_a/b/a_fold"/>
</dbReference>
<dbReference type="NCBIfam" id="NF001138">
    <property type="entry name" value="PRK00143.1"/>
    <property type="match status" value="1"/>
</dbReference>
<dbReference type="NCBIfam" id="TIGR00420">
    <property type="entry name" value="trmU"/>
    <property type="match status" value="1"/>
</dbReference>
<dbReference type="PANTHER" id="PTHR11933:SF5">
    <property type="entry name" value="MITOCHONDRIAL TRNA-SPECIFIC 2-THIOURIDYLASE 1"/>
    <property type="match status" value="1"/>
</dbReference>
<dbReference type="PANTHER" id="PTHR11933">
    <property type="entry name" value="TRNA 5-METHYLAMINOMETHYL-2-THIOURIDYLATE -METHYLTRANSFERASE"/>
    <property type="match status" value="1"/>
</dbReference>
<dbReference type="Pfam" id="PF03054">
    <property type="entry name" value="tRNA_Me_trans"/>
    <property type="match status" value="1"/>
</dbReference>
<dbReference type="Pfam" id="PF20258">
    <property type="entry name" value="tRNA_Me_trans_C"/>
    <property type="match status" value="1"/>
</dbReference>
<dbReference type="Pfam" id="PF20259">
    <property type="entry name" value="tRNA_Me_trans_M"/>
    <property type="match status" value="1"/>
</dbReference>
<dbReference type="SUPFAM" id="SSF52402">
    <property type="entry name" value="Adenine nucleotide alpha hydrolases-like"/>
    <property type="match status" value="1"/>
</dbReference>
<accession>Q8CXC7</accession>